<sequence>MQSDSAPLPRVEYVFETSKFRMTSRANEARLRLTNECPILVRPHEPFIMPTGIHFTRTPSCAFILTGETDKDVFCHTGLIDGGYRGEIQVILLNKRKYPVTLYRGELNICLSAFNYVLPPLRDVSFLTPPMYANDAGFDVMVMHSMVIPPTTDQPFMIYLGVETPGPPEPHVALALGRSGLASRGIVIDVSEWGPRGLQLKFYNYSGQPWLAQPGSRICQIVFVERRHILKGFKKCLRHRKLAPGVRFREARVHFREDTNSVRKHTHEDNPVHEPNVATASADIRGTKGLGSSGF</sequence>
<organism>
    <name type="scientific">Human herpesvirus 8 type P (isolate GK18)</name>
    <name type="common">HHV-8</name>
    <name type="synonym">Kaposi's sarcoma-associated herpesvirus</name>
    <dbReference type="NCBI Taxonomy" id="868565"/>
    <lineage>
        <taxon>Viruses</taxon>
        <taxon>Duplodnaviria</taxon>
        <taxon>Heunggongvirae</taxon>
        <taxon>Peploviricota</taxon>
        <taxon>Herviviricetes</taxon>
        <taxon>Herpesvirales</taxon>
        <taxon>Orthoherpesviridae</taxon>
        <taxon>Gammaherpesvirinae</taxon>
        <taxon>Rhadinovirus</taxon>
        <taxon>Rhadinovirus humangamma8</taxon>
        <taxon>Human herpesvirus 8</taxon>
    </lineage>
</organism>
<gene>
    <name evidence="1" type="primary">DUT</name>
    <name type="ordered locus">ORF54</name>
</gene>
<reference key="1">
    <citation type="journal article" date="1999" name="J. Virol.">
        <title>Identification of a spliced gene from Kaposi's sarcoma-associated herpesvirus encoding a protein with similarities to latent membrane proteins 1 and 2A of Epstein-Barr virus.</title>
        <authorList>
            <person name="Glenn M."/>
            <person name="Rainbow L."/>
            <person name="Aurade F."/>
            <person name="Davison A."/>
            <person name="Schulz T.F."/>
        </authorList>
    </citation>
    <scope>NUCLEOTIDE SEQUENCE [LARGE SCALE GENOMIC DNA]</scope>
</reference>
<reference key="2">
    <citation type="journal article" date="2006" name="J. Gen. Virol.">
        <title>Kaposi's sarcoma-associated herpesvirus immune modulation: an overview.</title>
        <authorList>
            <person name="Rezaee S.A.R."/>
            <person name="Cunningham C."/>
            <person name="Davison A.J."/>
            <person name="Blackbourn D.J."/>
        </authorList>
    </citation>
    <scope>NUCLEOTIDE SEQUENCE [LARGE SCALE GENOMIC DNA]</scope>
</reference>
<dbReference type="EC" id="3.6.1.23" evidence="1"/>
<dbReference type="EMBL" id="AF148805">
    <property type="protein sequence ID" value="ABD28905.1"/>
    <property type="molecule type" value="Genomic_DNA"/>
</dbReference>
<dbReference type="RefSeq" id="YP_001129407.1">
    <property type="nucleotide sequence ID" value="NC_009333.1"/>
</dbReference>
<dbReference type="SMR" id="Q2HR78"/>
<dbReference type="DNASU" id="4961459"/>
<dbReference type="GeneID" id="4961459"/>
<dbReference type="KEGG" id="vg:4961459"/>
<dbReference type="Proteomes" id="UP000000942">
    <property type="component" value="Segment"/>
</dbReference>
<dbReference type="GO" id="GO:0004170">
    <property type="term" value="F:dUTP diphosphatase activity"/>
    <property type="evidence" value="ECO:0007669"/>
    <property type="project" value="UniProtKB-EC"/>
</dbReference>
<dbReference type="GO" id="GO:0046872">
    <property type="term" value="F:metal ion binding"/>
    <property type="evidence" value="ECO:0007669"/>
    <property type="project" value="UniProtKB-KW"/>
</dbReference>
<dbReference type="GO" id="GO:0046080">
    <property type="term" value="P:dUTP metabolic process"/>
    <property type="evidence" value="ECO:0007669"/>
    <property type="project" value="InterPro"/>
</dbReference>
<dbReference type="CDD" id="cd07557">
    <property type="entry name" value="trimeric_dUTPase"/>
    <property type="match status" value="2"/>
</dbReference>
<dbReference type="Gene3D" id="2.70.40.10">
    <property type="match status" value="2"/>
</dbReference>
<dbReference type="HAMAP" id="MF_04031">
    <property type="entry name" value="HSV_DUT"/>
    <property type="match status" value="1"/>
</dbReference>
<dbReference type="InterPro" id="IPR029054">
    <property type="entry name" value="dUTPase-like"/>
</dbReference>
<dbReference type="InterPro" id="IPR036157">
    <property type="entry name" value="dUTPase-like_sf"/>
</dbReference>
<dbReference type="InterPro" id="IPR033704">
    <property type="entry name" value="dUTPase_trimeric"/>
</dbReference>
<dbReference type="InterPro" id="IPR034745">
    <property type="entry name" value="HSV_DUT"/>
</dbReference>
<dbReference type="Pfam" id="PF00692">
    <property type="entry name" value="dUTPase"/>
    <property type="match status" value="1"/>
</dbReference>
<dbReference type="SUPFAM" id="SSF51283">
    <property type="entry name" value="dUTPase-like"/>
    <property type="match status" value="2"/>
</dbReference>
<evidence type="ECO:0000255" key="1">
    <source>
        <dbReference type="HAMAP-Rule" id="MF_04031"/>
    </source>
</evidence>
<evidence type="ECO:0000256" key="2">
    <source>
        <dbReference type="SAM" id="MobiDB-lite"/>
    </source>
</evidence>
<organismHost>
    <name type="scientific">Homo sapiens</name>
    <name type="common">Human</name>
    <dbReference type="NCBI Taxonomy" id="9606"/>
</organismHost>
<feature type="chain" id="PRO_0000423878" description="Deoxyuridine 5'-triphosphate nucleotidohydrolase">
    <location>
        <begin position="1"/>
        <end position="295"/>
    </location>
</feature>
<feature type="region of interest" description="Disordered" evidence="2">
    <location>
        <begin position="260"/>
        <end position="295"/>
    </location>
</feature>
<feature type="compositionally biased region" description="Basic and acidic residues" evidence="2">
    <location>
        <begin position="260"/>
        <end position="272"/>
    </location>
</feature>
<feature type="binding site" evidence="1">
    <location>
        <begin position="178"/>
        <end position="180"/>
    </location>
    <ligand>
        <name>substrate</name>
    </ligand>
</feature>
<name>DUT_HHV8P</name>
<comment type="function">
    <text evidence="1">Involved in nucleotide metabolism: produces dUMP, the immediate precursor of thymidine nucleotides and decreases the intracellular concentration of dUTP to avoid uracil incorporation into viral DNA.</text>
</comment>
<comment type="catalytic activity">
    <reaction evidence="1">
        <text>dUTP + H2O = dUMP + diphosphate + H(+)</text>
        <dbReference type="Rhea" id="RHEA:10248"/>
        <dbReference type="ChEBI" id="CHEBI:15377"/>
        <dbReference type="ChEBI" id="CHEBI:15378"/>
        <dbReference type="ChEBI" id="CHEBI:33019"/>
        <dbReference type="ChEBI" id="CHEBI:61555"/>
        <dbReference type="ChEBI" id="CHEBI:246422"/>
        <dbReference type="EC" id="3.6.1.23"/>
    </reaction>
</comment>
<comment type="cofactor">
    <cofactor evidence="1">
        <name>Mg(2+)</name>
        <dbReference type="ChEBI" id="CHEBI:18420"/>
    </cofactor>
</comment>
<comment type="similarity">
    <text evidence="1">Belongs to the dUTPase family.</text>
</comment>
<accession>Q2HR78</accession>
<keyword id="KW-0378">Hydrolase</keyword>
<keyword id="KW-0460">Magnesium</keyword>
<keyword id="KW-0479">Metal-binding</keyword>
<keyword id="KW-0546">Nucleotide metabolism</keyword>
<keyword id="KW-1185">Reference proteome</keyword>
<proteinExistence type="inferred from homology"/>
<protein>
    <recommendedName>
        <fullName evidence="1">Deoxyuridine 5'-triphosphate nucleotidohydrolase</fullName>
        <shortName evidence="1">dUTPase</shortName>
        <ecNumber evidence="1">3.6.1.23</ecNumber>
    </recommendedName>
    <alternativeName>
        <fullName evidence="1">dUTP pyrophosphatase</fullName>
    </alternativeName>
</protein>